<comment type="function">
    <text evidence="1">Catalyzes the reversible conversion of ribose-5-phosphate to ribulose 5-phosphate.</text>
</comment>
<comment type="catalytic activity">
    <reaction evidence="1">
        <text>aldehydo-D-ribose 5-phosphate = D-ribulose 5-phosphate</text>
        <dbReference type="Rhea" id="RHEA:14657"/>
        <dbReference type="ChEBI" id="CHEBI:58121"/>
        <dbReference type="ChEBI" id="CHEBI:58273"/>
        <dbReference type="EC" id="5.3.1.6"/>
    </reaction>
</comment>
<comment type="pathway">
    <text evidence="1">Carbohydrate degradation; pentose phosphate pathway; D-ribose 5-phosphate from D-ribulose 5-phosphate (non-oxidative stage): step 1/1.</text>
</comment>
<comment type="subunit">
    <text evidence="1">Homodimer.</text>
</comment>
<comment type="similarity">
    <text evidence="1">Belongs to the ribose 5-phosphate isomerase family.</text>
</comment>
<gene>
    <name evidence="1" type="primary">rpiA</name>
    <name type="ordered locus">Rmag_0227</name>
</gene>
<reference key="1">
    <citation type="journal article" date="2007" name="Science">
        <title>The Calyptogena magnifica chemoautotrophic symbiont genome.</title>
        <authorList>
            <person name="Newton I.L.G."/>
            <person name="Woyke T."/>
            <person name="Auchtung T.A."/>
            <person name="Dilly G.F."/>
            <person name="Dutton R.J."/>
            <person name="Fisher M.C."/>
            <person name="Fontanez K.M."/>
            <person name="Lau E."/>
            <person name="Stewart F.J."/>
            <person name="Richardson P.M."/>
            <person name="Barry K.W."/>
            <person name="Saunders E."/>
            <person name="Detter J.C."/>
            <person name="Wu D."/>
            <person name="Eisen J.A."/>
            <person name="Cavanaugh C.M."/>
        </authorList>
    </citation>
    <scope>NUCLEOTIDE SEQUENCE [LARGE SCALE GENOMIC DNA]</scope>
</reference>
<dbReference type="EC" id="5.3.1.6" evidence="1"/>
<dbReference type="EMBL" id="CP000488">
    <property type="protein sequence ID" value="ABL02012.1"/>
    <property type="molecule type" value="Genomic_DNA"/>
</dbReference>
<dbReference type="RefSeq" id="WP_011737637.1">
    <property type="nucleotide sequence ID" value="NC_008610.1"/>
</dbReference>
<dbReference type="SMR" id="A1AVQ5"/>
<dbReference type="STRING" id="413404.Rmag_0227"/>
<dbReference type="KEGG" id="rma:Rmag_0227"/>
<dbReference type="eggNOG" id="COG0120">
    <property type="taxonomic scope" value="Bacteria"/>
</dbReference>
<dbReference type="HOGENOM" id="CLU_056590_1_1_6"/>
<dbReference type="OrthoDB" id="5870696at2"/>
<dbReference type="UniPathway" id="UPA00115">
    <property type="reaction ID" value="UER00412"/>
</dbReference>
<dbReference type="Proteomes" id="UP000002587">
    <property type="component" value="Chromosome"/>
</dbReference>
<dbReference type="GO" id="GO:0005829">
    <property type="term" value="C:cytosol"/>
    <property type="evidence" value="ECO:0007669"/>
    <property type="project" value="TreeGrafter"/>
</dbReference>
<dbReference type="GO" id="GO:0004751">
    <property type="term" value="F:ribose-5-phosphate isomerase activity"/>
    <property type="evidence" value="ECO:0007669"/>
    <property type="project" value="UniProtKB-UniRule"/>
</dbReference>
<dbReference type="GO" id="GO:0006014">
    <property type="term" value="P:D-ribose metabolic process"/>
    <property type="evidence" value="ECO:0007669"/>
    <property type="project" value="TreeGrafter"/>
</dbReference>
<dbReference type="GO" id="GO:0009052">
    <property type="term" value="P:pentose-phosphate shunt, non-oxidative branch"/>
    <property type="evidence" value="ECO:0007669"/>
    <property type="project" value="UniProtKB-UniRule"/>
</dbReference>
<dbReference type="CDD" id="cd01398">
    <property type="entry name" value="RPI_A"/>
    <property type="match status" value="1"/>
</dbReference>
<dbReference type="FunFam" id="3.40.50.1360:FF:000001">
    <property type="entry name" value="Ribose-5-phosphate isomerase A"/>
    <property type="match status" value="1"/>
</dbReference>
<dbReference type="Gene3D" id="3.30.70.260">
    <property type="match status" value="1"/>
</dbReference>
<dbReference type="Gene3D" id="3.40.50.1360">
    <property type="match status" value="1"/>
</dbReference>
<dbReference type="HAMAP" id="MF_00170">
    <property type="entry name" value="Rib_5P_isom_A"/>
    <property type="match status" value="1"/>
</dbReference>
<dbReference type="InterPro" id="IPR037171">
    <property type="entry name" value="NagB/RpiA_transferase-like"/>
</dbReference>
<dbReference type="InterPro" id="IPR020672">
    <property type="entry name" value="Ribose5P_isomerase_typA_subgr"/>
</dbReference>
<dbReference type="InterPro" id="IPR004788">
    <property type="entry name" value="Ribose5P_isomerase_type_A"/>
</dbReference>
<dbReference type="NCBIfam" id="NF001924">
    <property type="entry name" value="PRK00702.1"/>
    <property type="match status" value="1"/>
</dbReference>
<dbReference type="NCBIfam" id="TIGR00021">
    <property type="entry name" value="rpiA"/>
    <property type="match status" value="1"/>
</dbReference>
<dbReference type="PANTHER" id="PTHR11934">
    <property type="entry name" value="RIBOSE-5-PHOSPHATE ISOMERASE"/>
    <property type="match status" value="1"/>
</dbReference>
<dbReference type="PANTHER" id="PTHR11934:SF0">
    <property type="entry name" value="RIBOSE-5-PHOSPHATE ISOMERASE"/>
    <property type="match status" value="1"/>
</dbReference>
<dbReference type="Pfam" id="PF06026">
    <property type="entry name" value="Rib_5-P_isom_A"/>
    <property type="match status" value="1"/>
</dbReference>
<dbReference type="SUPFAM" id="SSF75445">
    <property type="entry name" value="D-ribose-5-phosphate isomerase (RpiA), lid domain"/>
    <property type="match status" value="1"/>
</dbReference>
<dbReference type="SUPFAM" id="SSF100950">
    <property type="entry name" value="NagB/RpiA/CoA transferase-like"/>
    <property type="match status" value="1"/>
</dbReference>
<keyword id="KW-0413">Isomerase</keyword>
<accession>A1AVQ5</accession>
<sequence length="223" mass="23963">MTQDEMKFAVAQAALKHVVKDTIIGVGTGSTTNFFIDALAKIKNEIKGAIASSKATRQRLESYDIKVFDLNEVETISVYIDGADESDDGLNLIKGGGGALMREKIVAAVANQFICIADESKLVTIMGDFPLPVEVIPMASNYVKYQISQRIGGTPTVRENFITDNGNLILDIKDLKITNPKVMETKLNSITGVVANGLFANRGADILLLGTSNGVKIVTRLIG</sequence>
<evidence type="ECO:0000255" key="1">
    <source>
        <dbReference type="HAMAP-Rule" id="MF_00170"/>
    </source>
</evidence>
<proteinExistence type="inferred from homology"/>
<name>RPIA_RUTMC</name>
<feature type="chain" id="PRO_1000016983" description="Ribose-5-phosphate isomerase A">
    <location>
        <begin position="1"/>
        <end position="223"/>
    </location>
</feature>
<feature type="active site" description="Proton acceptor" evidence="1">
    <location>
        <position position="103"/>
    </location>
</feature>
<feature type="binding site" evidence="1">
    <location>
        <begin position="28"/>
        <end position="31"/>
    </location>
    <ligand>
        <name>substrate</name>
    </ligand>
</feature>
<feature type="binding site" evidence="1">
    <location>
        <begin position="81"/>
        <end position="84"/>
    </location>
    <ligand>
        <name>substrate</name>
    </ligand>
</feature>
<feature type="binding site" evidence="1">
    <location>
        <begin position="94"/>
        <end position="97"/>
    </location>
    <ligand>
        <name>substrate</name>
    </ligand>
</feature>
<feature type="binding site" evidence="1">
    <location>
        <position position="121"/>
    </location>
    <ligand>
        <name>substrate</name>
    </ligand>
</feature>
<protein>
    <recommendedName>
        <fullName evidence="1">Ribose-5-phosphate isomerase A</fullName>
        <ecNumber evidence="1">5.3.1.6</ecNumber>
    </recommendedName>
    <alternativeName>
        <fullName evidence="1">Phosphoriboisomerase A</fullName>
        <shortName evidence="1">PRI</shortName>
    </alternativeName>
</protein>
<organism>
    <name type="scientific">Ruthia magnifica subsp. Calyptogena magnifica</name>
    <dbReference type="NCBI Taxonomy" id="413404"/>
    <lineage>
        <taxon>Bacteria</taxon>
        <taxon>Pseudomonadati</taxon>
        <taxon>Pseudomonadota</taxon>
        <taxon>Gammaproteobacteria</taxon>
        <taxon>Candidatus Pseudothioglobaceae</taxon>
        <taxon>Candidatus Ruthturnera</taxon>
    </lineage>
</organism>